<protein>
    <recommendedName>
        <fullName evidence="6">Alpha-2A adrenergic receptor</fullName>
    </recommendedName>
    <alternativeName>
        <fullName>Alpha-2A adrenoreceptor</fullName>
        <shortName>Alpha-2A adrenoceptor</shortName>
        <shortName>Alpha-2AAR</shortName>
    </alternativeName>
</protein>
<keyword id="KW-1003">Cell membrane</keyword>
<keyword id="KW-1015">Disulfide bond</keyword>
<keyword id="KW-0297">G-protein coupled receptor</keyword>
<keyword id="KW-0325">Glycoprotein</keyword>
<keyword id="KW-0449">Lipoprotein</keyword>
<keyword id="KW-0472">Membrane</keyword>
<keyword id="KW-0488">Methylation</keyword>
<keyword id="KW-0564">Palmitate</keyword>
<keyword id="KW-0597">Phosphoprotein</keyword>
<keyword id="KW-0675">Receptor</keyword>
<keyword id="KW-1185">Reference proteome</keyword>
<keyword id="KW-0807">Transducer</keyword>
<keyword id="KW-0812">Transmembrane</keyword>
<keyword id="KW-1133">Transmembrane helix</keyword>
<gene>
    <name evidence="7" type="primary">Adra2a</name>
</gene>
<dbReference type="EMBL" id="M99377">
    <property type="protein sequence ID" value="AAA37213.1"/>
    <property type="status" value="ALT_SEQ"/>
    <property type="molecule type" value="Genomic_DNA"/>
</dbReference>
<dbReference type="EMBL" id="AK141573">
    <property type="protein sequence ID" value="BAE24742.1"/>
    <property type="molecule type" value="mRNA"/>
</dbReference>
<dbReference type="EMBL" id="AC113491">
    <property type="status" value="NOT_ANNOTATED_CDS"/>
    <property type="molecule type" value="Genomic_DNA"/>
</dbReference>
<dbReference type="EMBL" id="BC138531">
    <property type="protein sequence ID" value="AAI38532.1"/>
    <property type="molecule type" value="mRNA"/>
</dbReference>
<dbReference type="CCDS" id="CCDS29905.1"/>
<dbReference type="PIR" id="I49481">
    <property type="entry name" value="I49481"/>
</dbReference>
<dbReference type="RefSeq" id="NP_031443.4">
    <property type="nucleotide sequence ID" value="NM_007417.5"/>
</dbReference>
<dbReference type="BMRB" id="Q01338"/>
<dbReference type="SMR" id="Q01338"/>
<dbReference type="CORUM" id="Q01338"/>
<dbReference type="FunCoup" id="Q01338">
    <property type="interactions" value="751"/>
</dbReference>
<dbReference type="IntAct" id="Q01338">
    <property type="interactions" value="1"/>
</dbReference>
<dbReference type="STRING" id="10090.ENSMUSP00000036203"/>
<dbReference type="ChEMBL" id="CHEMBL4075"/>
<dbReference type="DrugCentral" id="Q01338"/>
<dbReference type="GlyCosmos" id="Q01338">
    <property type="glycosylation" value="2 sites, No reported glycans"/>
</dbReference>
<dbReference type="GlyGen" id="Q01338">
    <property type="glycosylation" value="3 sites"/>
</dbReference>
<dbReference type="iPTMnet" id="Q01338"/>
<dbReference type="PhosphoSitePlus" id="Q01338"/>
<dbReference type="PaxDb" id="10090-ENSMUSP00000036203"/>
<dbReference type="PeptideAtlas" id="Q01338"/>
<dbReference type="ProteomicsDB" id="285608"/>
<dbReference type="ProteomicsDB" id="344753"/>
<dbReference type="Antibodypedia" id="31769">
    <property type="antibodies" value="336 antibodies from 37 providers"/>
</dbReference>
<dbReference type="DNASU" id="11551"/>
<dbReference type="Ensembl" id="ENSMUST00000036700.7">
    <property type="protein sequence ID" value="ENSMUSP00000036203.6"/>
    <property type="gene ID" value="ENSMUSG00000033717.7"/>
</dbReference>
<dbReference type="Ensembl" id="ENSMUST00000237285.2">
    <property type="protein sequence ID" value="ENSMUSP00000157421.2"/>
    <property type="gene ID" value="ENSMUSG00000033717.7"/>
</dbReference>
<dbReference type="GeneID" id="11551"/>
<dbReference type="KEGG" id="mmu:11551"/>
<dbReference type="UCSC" id="uc008hxi.1">
    <property type="organism name" value="mouse"/>
</dbReference>
<dbReference type="AGR" id="MGI:87934"/>
<dbReference type="CTD" id="150"/>
<dbReference type="MGI" id="MGI:87934">
    <property type="gene designation" value="Adra2a"/>
</dbReference>
<dbReference type="VEuPathDB" id="HostDB:ENSMUSG00000033717"/>
<dbReference type="eggNOG" id="KOG3656">
    <property type="taxonomic scope" value="Eukaryota"/>
</dbReference>
<dbReference type="GeneTree" id="ENSGT00940000161451"/>
<dbReference type="HOGENOM" id="CLU_009579_11_1_1"/>
<dbReference type="InParanoid" id="Q01338"/>
<dbReference type="OMA" id="FFTYMLM"/>
<dbReference type="OrthoDB" id="5975661at2759"/>
<dbReference type="PhylomeDB" id="Q01338"/>
<dbReference type="TreeFam" id="TF316350"/>
<dbReference type="Reactome" id="R-MMU-390696">
    <property type="pathway name" value="Adrenoceptors"/>
</dbReference>
<dbReference type="Reactome" id="R-MMU-392023">
    <property type="pathway name" value="Adrenaline signalling through Alpha-2 adrenergic receptor"/>
</dbReference>
<dbReference type="Reactome" id="R-MMU-400042">
    <property type="pathway name" value="Adrenaline,noradrenaline inhibits insulin secretion"/>
</dbReference>
<dbReference type="Reactome" id="R-MMU-418594">
    <property type="pathway name" value="G alpha (i) signalling events"/>
</dbReference>
<dbReference type="Reactome" id="R-MMU-418597">
    <property type="pathway name" value="G alpha (z) signalling events"/>
</dbReference>
<dbReference type="Reactome" id="R-MMU-5683826">
    <property type="pathway name" value="Surfactant metabolism"/>
</dbReference>
<dbReference type="BioGRID-ORCS" id="11551">
    <property type="hits" value="4 hits in 79 CRISPR screens"/>
</dbReference>
<dbReference type="PRO" id="PR:Q01338"/>
<dbReference type="Proteomes" id="UP000000589">
    <property type="component" value="Chromosome 19"/>
</dbReference>
<dbReference type="RNAct" id="Q01338">
    <property type="molecule type" value="protein"/>
</dbReference>
<dbReference type="Bgee" id="ENSMUSG00000033717">
    <property type="expression patterns" value="Expressed in pontine nuclear group and 170 other cell types or tissues"/>
</dbReference>
<dbReference type="GO" id="GO:0043679">
    <property type="term" value="C:axon terminus"/>
    <property type="evidence" value="ECO:0007669"/>
    <property type="project" value="Ensembl"/>
</dbReference>
<dbReference type="GO" id="GO:0005737">
    <property type="term" value="C:cytoplasm"/>
    <property type="evidence" value="ECO:0007669"/>
    <property type="project" value="Ensembl"/>
</dbReference>
<dbReference type="GO" id="GO:0098691">
    <property type="term" value="C:dopaminergic synapse"/>
    <property type="evidence" value="ECO:0000314"/>
    <property type="project" value="SynGO"/>
</dbReference>
<dbReference type="GO" id="GO:0098982">
    <property type="term" value="C:GABA-ergic synapse"/>
    <property type="evidence" value="ECO:0007669"/>
    <property type="project" value="Ensembl"/>
</dbReference>
<dbReference type="GO" id="GO:0098978">
    <property type="term" value="C:glutamatergic synapse"/>
    <property type="evidence" value="ECO:0007669"/>
    <property type="project" value="Ensembl"/>
</dbReference>
<dbReference type="GO" id="GO:0043025">
    <property type="term" value="C:neuronal cell body"/>
    <property type="evidence" value="ECO:0007669"/>
    <property type="project" value="Ensembl"/>
</dbReference>
<dbReference type="GO" id="GO:0098839">
    <property type="term" value="C:postsynaptic density membrane"/>
    <property type="evidence" value="ECO:0007669"/>
    <property type="project" value="Ensembl"/>
</dbReference>
<dbReference type="GO" id="GO:0048787">
    <property type="term" value="C:presynaptic active zone membrane"/>
    <property type="evidence" value="ECO:0007669"/>
    <property type="project" value="Ensembl"/>
</dbReference>
<dbReference type="GO" id="GO:0043235">
    <property type="term" value="C:receptor complex"/>
    <property type="evidence" value="ECO:0007669"/>
    <property type="project" value="Ensembl"/>
</dbReference>
<dbReference type="GO" id="GO:0004935">
    <property type="term" value="F:adrenergic receptor activity"/>
    <property type="evidence" value="ECO:0000315"/>
    <property type="project" value="MGI"/>
</dbReference>
<dbReference type="GO" id="GO:0031696">
    <property type="term" value="F:alpha-2C adrenergic receptor binding"/>
    <property type="evidence" value="ECO:0007669"/>
    <property type="project" value="Ensembl"/>
</dbReference>
<dbReference type="GO" id="GO:0004938">
    <property type="term" value="F:alpha2-adrenergic receptor activity"/>
    <property type="evidence" value="ECO:0000315"/>
    <property type="project" value="MGI"/>
</dbReference>
<dbReference type="GO" id="GO:0051379">
    <property type="term" value="F:epinephrine binding"/>
    <property type="evidence" value="ECO:0007669"/>
    <property type="project" value="Ensembl"/>
</dbReference>
<dbReference type="GO" id="GO:0032795">
    <property type="term" value="F:heterotrimeric G-protein binding"/>
    <property type="evidence" value="ECO:0007669"/>
    <property type="project" value="Ensembl"/>
</dbReference>
<dbReference type="GO" id="GO:0051380">
    <property type="term" value="F:norepinephrine binding"/>
    <property type="evidence" value="ECO:0007669"/>
    <property type="project" value="Ensembl"/>
</dbReference>
<dbReference type="GO" id="GO:0046982">
    <property type="term" value="F:protein heterodimerization activity"/>
    <property type="evidence" value="ECO:0007669"/>
    <property type="project" value="Ensembl"/>
</dbReference>
<dbReference type="GO" id="GO:0042803">
    <property type="term" value="F:protein homodimerization activity"/>
    <property type="evidence" value="ECO:0007669"/>
    <property type="project" value="Ensembl"/>
</dbReference>
<dbReference type="GO" id="GO:0019901">
    <property type="term" value="F:protein kinase binding"/>
    <property type="evidence" value="ECO:0007669"/>
    <property type="project" value="Ensembl"/>
</dbReference>
<dbReference type="GO" id="GO:0031996">
    <property type="term" value="F:thioesterase binding"/>
    <property type="evidence" value="ECO:0007669"/>
    <property type="project" value="Ensembl"/>
</dbReference>
<dbReference type="GO" id="GO:0071880">
    <property type="term" value="P:adenylate cyclase-activating adrenergic receptor signaling pathway"/>
    <property type="evidence" value="ECO:0007669"/>
    <property type="project" value="Ensembl"/>
</dbReference>
<dbReference type="GO" id="GO:0071881">
    <property type="term" value="P:adenylate cyclase-inhibiting adrenergic receptor signaling pathway"/>
    <property type="evidence" value="ECO:0007669"/>
    <property type="project" value="Ensembl"/>
</dbReference>
<dbReference type="GO" id="GO:0032870">
    <property type="term" value="P:cellular response to hormone stimulus"/>
    <property type="evidence" value="ECO:0007669"/>
    <property type="project" value="Ensembl"/>
</dbReference>
<dbReference type="GO" id="GO:0006260">
    <property type="term" value="P:DNA replication"/>
    <property type="evidence" value="ECO:0007669"/>
    <property type="project" value="Ensembl"/>
</dbReference>
<dbReference type="GO" id="GO:0042596">
    <property type="term" value="P:fear response"/>
    <property type="evidence" value="ECO:0000315"/>
    <property type="project" value="MGI"/>
</dbReference>
<dbReference type="GO" id="GO:0007565">
    <property type="term" value="P:female pregnancy"/>
    <property type="evidence" value="ECO:0007669"/>
    <property type="project" value="Ensembl"/>
</dbReference>
<dbReference type="GO" id="GO:0007186">
    <property type="term" value="P:G protein-coupled receptor signaling pathway"/>
    <property type="evidence" value="ECO:0000314"/>
    <property type="project" value="MGI"/>
</dbReference>
<dbReference type="GO" id="GO:0042593">
    <property type="term" value="P:glucose homeostasis"/>
    <property type="evidence" value="ECO:0007669"/>
    <property type="project" value="Ensembl"/>
</dbReference>
<dbReference type="GO" id="GO:0045955">
    <property type="term" value="P:negative regulation of calcium ion-dependent exocytosis"/>
    <property type="evidence" value="ECO:0007669"/>
    <property type="project" value="Ensembl"/>
</dbReference>
<dbReference type="GO" id="GO:0046676">
    <property type="term" value="P:negative regulation of insulin secretion"/>
    <property type="evidence" value="ECO:0000314"/>
    <property type="project" value="MGI"/>
</dbReference>
<dbReference type="GO" id="GO:0061179">
    <property type="term" value="P:negative regulation of insulin secretion involved in cellular response to glucose stimulus"/>
    <property type="evidence" value="ECO:0007669"/>
    <property type="project" value="Ensembl"/>
</dbReference>
<dbReference type="GO" id="GO:0050995">
    <property type="term" value="P:negative regulation of lipid catabolic process"/>
    <property type="evidence" value="ECO:0007669"/>
    <property type="project" value="Ensembl"/>
</dbReference>
<dbReference type="GO" id="GO:0070473">
    <property type="term" value="P:negative regulation of uterine smooth muscle contraction"/>
    <property type="evidence" value="ECO:0007669"/>
    <property type="project" value="Ensembl"/>
</dbReference>
<dbReference type="GO" id="GO:0071882">
    <property type="term" value="P:phospholipase C-activating adrenergic receptor signaling pathway"/>
    <property type="evidence" value="ECO:0007669"/>
    <property type="project" value="Ensembl"/>
</dbReference>
<dbReference type="GO" id="GO:0030168">
    <property type="term" value="P:platelet activation"/>
    <property type="evidence" value="ECO:0007669"/>
    <property type="project" value="InterPro"/>
</dbReference>
<dbReference type="GO" id="GO:0030335">
    <property type="term" value="P:positive regulation of cell migration"/>
    <property type="evidence" value="ECO:0007669"/>
    <property type="project" value="Ensembl"/>
</dbReference>
<dbReference type="GO" id="GO:0001819">
    <property type="term" value="P:positive regulation of cytokine production"/>
    <property type="evidence" value="ECO:0007669"/>
    <property type="project" value="Ensembl"/>
</dbReference>
<dbReference type="GO" id="GO:0045742">
    <property type="term" value="P:positive regulation of epidermal growth factor receptor signaling pathway"/>
    <property type="evidence" value="ECO:0007669"/>
    <property type="project" value="Ensembl"/>
</dbReference>
<dbReference type="GO" id="GO:0043410">
    <property type="term" value="P:positive regulation of MAPK cascade"/>
    <property type="evidence" value="ECO:0007669"/>
    <property type="project" value="Ensembl"/>
</dbReference>
<dbReference type="GO" id="GO:0051044">
    <property type="term" value="P:positive regulation of membrane protein ectodomain proteolysis"/>
    <property type="evidence" value="ECO:0007669"/>
    <property type="project" value="Ensembl"/>
</dbReference>
<dbReference type="GO" id="GO:0051897">
    <property type="term" value="P:positive regulation of phosphatidylinositol 3-kinase/protein kinase B signal transduction"/>
    <property type="evidence" value="ECO:0007669"/>
    <property type="project" value="Ensembl"/>
</dbReference>
<dbReference type="GO" id="GO:0090303">
    <property type="term" value="P:positive regulation of wound healing"/>
    <property type="evidence" value="ECO:0007669"/>
    <property type="project" value="Ensembl"/>
</dbReference>
<dbReference type="GO" id="GO:0099171">
    <property type="term" value="P:presynaptic modulation of chemical synaptic transmission"/>
    <property type="evidence" value="ECO:0000314"/>
    <property type="project" value="SynGO"/>
</dbReference>
<dbReference type="GO" id="GO:0019229">
    <property type="term" value="P:regulation of vasoconstriction"/>
    <property type="evidence" value="ECO:0007669"/>
    <property type="project" value="InterPro"/>
</dbReference>
<dbReference type="GO" id="GO:0097305">
    <property type="term" value="P:response to alcohol"/>
    <property type="evidence" value="ECO:0007669"/>
    <property type="project" value="Ensembl"/>
</dbReference>
<dbReference type="GO" id="GO:0043278">
    <property type="term" value="P:response to morphine"/>
    <property type="evidence" value="ECO:0007669"/>
    <property type="project" value="Ensembl"/>
</dbReference>
<dbReference type="GO" id="GO:0050955">
    <property type="term" value="P:thermoception"/>
    <property type="evidence" value="ECO:0007669"/>
    <property type="project" value="Ensembl"/>
</dbReference>
<dbReference type="GO" id="GO:0042311">
    <property type="term" value="P:vasodilation"/>
    <property type="evidence" value="ECO:0007669"/>
    <property type="project" value="Ensembl"/>
</dbReference>
<dbReference type="CDD" id="cd15322">
    <property type="entry name" value="7tmA_alpha2A_AR"/>
    <property type="match status" value="1"/>
</dbReference>
<dbReference type="Gene3D" id="1.20.1070.10">
    <property type="entry name" value="Rhodopsin 7-helix transmembrane proteins"/>
    <property type="match status" value="1"/>
</dbReference>
<dbReference type="InterPro" id="IPR002233">
    <property type="entry name" value="ADR_fam"/>
</dbReference>
<dbReference type="InterPro" id="IPR001946">
    <property type="entry name" value="ADRA2A_rcpt"/>
</dbReference>
<dbReference type="InterPro" id="IPR000276">
    <property type="entry name" value="GPCR_Rhodpsn"/>
</dbReference>
<dbReference type="InterPro" id="IPR017452">
    <property type="entry name" value="GPCR_Rhodpsn_7TM"/>
</dbReference>
<dbReference type="PANTHER" id="PTHR24248">
    <property type="entry name" value="ADRENERGIC RECEPTOR-RELATED G-PROTEIN COUPLED RECEPTOR"/>
    <property type="match status" value="1"/>
</dbReference>
<dbReference type="PANTHER" id="PTHR24248:SF24">
    <property type="entry name" value="ALPHA-2A ADRENERGIC RECEPTOR"/>
    <property type="match status" value="1"/>
</dbReference>
<dbReference type="Pfam" id="PF00001">
    <property type="entry name" value="7tm_1"/>
    <property type="match status" value="1"/>
</dbReference>
<dbReference type="PRINTS" id="PR01103">
    <property type="entry name" value="ADRENERGICR"/>
</dbReference>
<dbReference type="PRINTS" id="PR00558">
    <property type="entry name" value="ADRENRGCA2AR"/>
</dbReference>
<dbReference type="PRINTS" id="PR00237">
    <property type="entry name" value="GPCRRHODOPSN"/>
</dbReference>
<dbReference type="SMART" id="SM01381">
    <property type="entry name" value="7TM_GPCR_Srsx"/>
    <property type="match status" value="1"/>
</dbReference>
<dbReference type="SUPFAM" id="SSF81321">
    <property type="entry name" value="Family A G protein-coupled receptor-like"/>
    <property type="match status" value="1"/>
</dbReference>
<dbReference type="PROSITE" id="PS00237">
    <property type="entry name" value="G_PROTEIN_RECEP_F1_1"/>
    <property type="match status" value="1"/>
</dbReference>
<dbReference type="PROSITE" id="PS50262">
    <property type="entry name" value="G_PROTEIN_RECEP_F1_2"/>
    <property type="match status" value="1"/>
</dbReference>
<sequence length="465" mass="50555">MFRQEQPLAEGSFAPMGSLQPDAGNSSWNGTEAPGGGTRATPYSLQVTLTLVCLAGLLMLFTVFGNVLVIIAVFTSRALKAPQNLFLVSLASADILVATLVIPFSLANEVMGYWYFGKVWCEIYLALDVLFCTSSIVHLCAISLDRYWSITQAIEYNLKRTPRRIKAIIVTVWVISAVISFPPLISIEKKGAGGGQQPAEPSCKINDQKWYVISSSIGSFFAPCLIMILVYVRIYQIAKRRTRVPPSRRGPDACSAPPGGADRRPNGLGPERGAGPTGAEAEPLPTQLNGAPGEPAPAGPRDGDALDLEESSSSEHAERPPGPRRPDRGPRAKGKTRASQVKPGDSLPRRGPGAAGPGASGSGHGEERGGGAKASRWRGRQNREKRFTFVLAVVIGVFVVCWFPFFFTYTLIAVGCPVPSQLFNFFFWFGYCNSSLNPVIYTIFNHDFRRAFKKILCRGDRKRIV</sequence>
<comment type="function">
    <text>Alpha-2 adrenergic receptors mediate the catecholamine-induced inhibition of adenylate cyclase through the action of G proteins.</text>
</comment>
<comment type="interaction">
    <interactant intactId="EBI-491073">
        <id>Q01338</id>
    </interactant>
    <interactant intactId="EBI-491065">
        <id>Q14232</id>
        <label>EIF2B1</label>
    </interactant>
    <organismsDiffer>true</organismsDiffer>
    <experiments>2</experiments>
</comment>
<comment type="subcellular location">
    <subcellularLocation>
        <location>Cell membrane</location>
        <topology>Multi-pass membrane protein</topology>
    </subcellularLocation>
</comment>
<comment type="similarity">
    <text evidence="4">Belongs to the G-protein coupled receptor 1 family. Adrenergic receptor subfamily. ADRA2A sub-subfamily.</text>
</comment>
<comment type="caution">
    <text evidence="6">It is uncertain whether Met-1 or Met-16 is the initiator.</text>
</comment>
<comment type="sequence caution" evidence="6">
    <conflict type="erroneous initiation">
        <sequence resource="EMBL-CDS" id="AAA37213"/>
    </conflict>
    <text>Truncated N-terminus.</text>
</comment>
<comment type="sequence caution" evidence="6">
    <conflict type="frameshift">
        <sequence resource="EMBL-CDS" id="AAA37213"/>
    </conflict>
</comment>
<organism>
    <name type="scientific">Mus musculus</name>
    <name type="common">Mouse</name>
    <dbReference type="NCBI Taxonomy" id="10090"/>
    <lineage>
        <taxon>Eukaryota</taxon>
        <taxon>Metazoa</taxon>
        <taxon>Chordata</taxon>
        <taxon>Craniata</taxon>
        <taxon>Vertebrata</taxon>
        <taxon>Euteleostomi</taxon>
        <taxon>Mammalia</taxon>
        <taxon>Eutheria</taxon>
        <taxon>Euarchontoglires</taxon>
        <taxon>Glires</taxon>
        <taxon>Rodentia</taxon>
        <taxon>Myomorpha</taxon>
        <taxon>Muroidea</taxon>
        <taxon>Muridae</taxon>
        <taxon>Murinae</taxon>
        <taxon>Mus</taxon>
        <taxon>Mus</taxon>
    </lineage>
</organism>
<reference key="1">
    <citation type="journal article" date="1992" name="Mol. Pharmacol.">
        <title>Cloning of two mouse genes encoding alpha 2-adrenergic receptor subtypes and identification of a single amino acid in the mouse alpha 2-C10 homolog responsible for an interspecies variation in antagonist binding.</title>
        <authorList>
            <person name="Link R.E."/>
            <person name="Daunt D.A."/>
            <person name="Barsh G."/>
            <person name="Chruscinski A.J."/>
            <person name="Kobilka B.K."/>
        </authorList>
    </citation>
    <scope>NUCLEOTIDE SEQUENCE [GENOMIC DNA]</scope>
</reference>
<reference key="2">
    <citation type="journal article" date="2005" name="Science">
        <title>The transcriptional landscape of the mammalian genome.</title>
        <authorList>
            <person name="Carninci P."/>
            <person name="Kasukawa T."/>
            <person name="Katayama S."/>
            <person name="Gough J."/>
            <person name="Frith M.C."/>
            <person name="Maeda N."/>
            <person name="Oyama R."/>
            <person name="Ravasi T."/>
            <person name="Lenhard B."/>
            <person name="Wells C."/>
            <person name="Kodzius R."/>
            <person name="Shimokawa K."/>
            <person name="Bajic V.B."/>
            <person name="Brenner S.E."/>
            <person name="Batalov S."/>
            <person name="Forrest A.R."/>
            <person name="Zavolan M."/>
            <person name="Davis M.J."/>
            <person name="Wilming L.G."/>
            <person name="Aidinis V."/>
            <person name="Allen J.E."/>
            <person name="Ambesi-Impiombato A."/>
            <person name="Apweiler R."/>
            <person name="Aturaliya R.N."/>
            <person name="Bailey T.L."/>
            <person name="Bansal M."/>
            <person name="Baxter L."/>
            <person name="Beisel K.W."/>
            <person name="Bersano T."/>
            <person name="Bono H."/>
            <person name="Chalk A.M."/>
            <person name="Chiu K.P."/>
            <person name="Choudhary V."/>
            <person name="Christoffels A."/>
            <person name="Clutterbuck D.R."/>
            <person name="Crowe M.L."/>
            <person name="Dalla E."/>
            <person name="Dalrymple B.P."/>
            <person name="de Bono B."/>
            <person name="Della Gatta G."/>
            <person name="di Bernardo D."/>
            <person name="Down T."/>
            <person name="Engstrom P."/>
            <person name="Fagiolini M."/>
            <person name="Faulkner G."/>
            <person name="Fletcher C.F."/>
            <person name="Fukushima T."/>
            <person name="Furuno M."/>
            <person name="Futaki S."/>
            <person name="Gariboldi M."/>
            <person name="Georgii-Hemming P."/>
            <person name="Gingeras T.R."/>
            <person name="Gojobori T."/>
            <person name="Green R.E."/>
            <person name="Gustincich S."/>
            <person name="Harbers M."/>
            <person name="Hayashi Y."/>
            <person name="Hensch T.K."/>
            <person name="Hirokawa N."/>
            <person name="Hill D."/>
            <person name="Huminiecki L."/>
            <person name="Iacono M."/>
            <person name="Ikeo K."/>
            <person name="Iwama A."/>
            <person name="Ishikawa T."/>
            <person name="Jakt M."/>
            <person name="Kanapin A."/>
            <person name="Katoh M."/>
            <person name="Kawasawa Y."/>
            <person name="Kelso J."/>
            <person name="Kitamura H."/>
            <person name="Kitano H."/>
            <person name="Kollias G."/>
            <person name="Krishnan S.P."/>
            <person name="Kruger A."/>
            <person name="Kummerfeld S.K."/>
            <person name="Kurochkin I.V."/>
            <person name="Lareau L.F."/>
            <person name="Lazarevic D."/>
            <person name="Lipovich L."/>
            <person name="Liu J."/>
            <person name="Liuni S."/>
            <person name="McWilliam S."/>
            <person name="Madan Babu M."/>
            <person name="Madera M."/>
            <person name="Marchionni L."/>
            <person name="Matsuda H."/>
            <person name="Matsuzawa S."/>
            <person name="Miki H."/>
            <person name="Mignone F."/>
            <person name="Miyake S."/>
            <person name="Morris K."/>
            <person name="Mottagui-Tabar S."/>
            <person name="Mulder N."/>
            <person name="Nakano N."/>
            <person name="Nakauchi H."/>
            <person name="Ng P."/>
            <person name="Nilsson R."/>
            <person name="Nishiguchi S."/>
            <person name="Nishikawa S."/>
            <person name="Nori F."/>
            <person name="Ohara O."/>
            <person name="Okazaki Y."/>
            <person name="Orlando V."/>
            <person name="Pang K.C."/>
            <person name="Pavan W.J."/>
            <person name="Pavesi G."/>
            <person name="Pesole G."/>
            <person name="Petrovsky N."/>
            <person name="Piazza S."/>
            <person name="Reed J."/>
            <person name="Reid J.F."/>
            <person name="Ring B.Z."/>
            <person name="Ringwald M."/>
            <person name="Rost B."/>
            <person name="Ruan Y."/>
            <person name="Salzberg S.L."/>
            <person name="Sandelin A."/>
            <person name="Schneider C."/>
            <person name="Schoenbach C."/>
            <person name="Sekiguchi K."/>
            <person name="Semple C.A."/>
            <person name="Seno S."/>
            <person name="Sessa L."/>
            <person name="Sheng Y."/>
            <person name="Shibata Y."/>
            <person name="Shimada H."/>
            <person name="Shimada K."/>
            <person name="Silva D."/>
            <person name="Sinclair B."/>
            <person name="Sperling S."/>
            <person name="Stupka E."/>
            <person name="Sugiura K."/>
            <person name="Sultana R."/>
            <person name="Takenaka Y."/>
            <person name="Taki K."/>
            <person name="Tammoja K."/>
            <person name="Tan S.L."/>
            <person name="Tang S."/>
            <person name="Taylor M.S."/>
            <person name="Tegner J."/>
            <person name="Teichmann S.A."/>
            <person name="Ueda H.R."/>
            <person name="van Nimwegen E."/>
            <person name="Verardo R."/>
            <person name="Wei C.L."/>
            <person name="Yagi K."/>
            <person name="Yamanishi H."/>
            <person name="Zabarovsky E."/>
            <person name="Zhu S."/>
            <person name="Zimmer A."/>
            <person name="Hide W."/>
            <person name="Bult C."/>
            <person name="Grimmond S.M."/>
            <person name="Teasdale R.D."/>
            <person name="Liu E.T."/>
            <person name="Brusic V."/>
            <person name="Quackenbush J."/>
            <person name="Wahlestedt C."/>
            <person name="Mattick J.S."/>
            <person name="Hume D.A."/>
            <person name="Kai C."/>
            <person name="Sasaki D."/>
            <person name="Tomaru Y."/>
            <person name="Fukuda S."/>
            <person name="Kanamori-Katayama M."/>
            <person name="Suzuki M."/>
            <person name="Aoki J."/>
            <person name="Arakawa T."/>
            <person name="Iida J."/>
            <person name="Imamura K."/>
            <person name="Itoh M."/>
            <person name="Kato T."/>
            <person name="Kawaji H."/>
            <person name="Kawagashira N."/>
            <person name="Kawashima T."/>
            <person name="Kojima M."/>
            <person name="Kondo S."/>
            <person name="Konno H."/>
            <person name="Nakano K."/>
            <person name="Ninomiya N."/>
            <person name="Nishio T."/>
            <person name="Okada M."/>
            <person name="Plessy C."/>
            <person name="Shibata K."/>
            <person name="Shiraki T."/>
            <person name="Suzuki S."/>
            <person name="Tagami M."/>
            <person name="Waki K."/>
            <person name="Watahiki A."/>
            <person name="Okamura-Oho Y."/>
            <person name="Suzuki H."/>
            <person name="Kawai J."/>
            <person name="Hayashizaki Y."/>
        </authorList>
    </citation>
    <scope>NUCLEOTIDE SEQUENCE [LARGE SCALE MRNA]</scope>
    <source>
        <strain>C57BL/6J</strain>
        <tissue>Hippocampus</tissue>
    </source>
</reference>
<reference key="3">
    <citation type="journal article" date="2009" name="PLoS Biol.">
        <title>Lineage-specific biology revealed by a finished genome assembly of the mouse.</title>
        <authorList>
            <person name="Church D.M."/>
            <person name="Goodstadt L."/>
            <person name="Hillier L.W."/>
            <person name="Zody M.C."/>
            <person name="Goldstein S."/>
            <person name="She X."/>
            <person name="Bult C.J."/>
            <person name="Agarwala R."/>
            <person name="Cherry J.L."/>
            <person name="DiCuccio M."/>
            <person name="Hlavina W."/>
            <person name="Kapustin Y."/>
            <person name="Meric P."/>
            <person name="Maglott D."/>
            <person name="Birtle Z."/>
            <person name="Marques A.C."/>
            <person name="Graves T."/>
            <person name="Zhou S."/>
            <person name="Teague B."/>
            <person name="Potamousis K."/>
            <person name="Churas C."/>
            <person name="Place M."/>
            <person name="Herschleb J."/>
            <person name="Runnheim R."/>
            <person name="Forrest D."/>
            <person name="Amos-Landgraf J."/>
            <person name="Schwartz D.C."/>
            <person name="Cheng Z."/>
            <person name="Lindblad-Toh K."/>
            <person name="Eichler E.E."/>
            <person name="Ponting C.P."/>
        </authorList>
    </citation>
    <scope>NUCLEOTIDE SEQUENCE [LARGE SCALE GENOMIC DNA]</scope>
    <source>
        <strain>C57BL/6J</strain>
    </source>
</reference>
<reference key="4">
    <citation type="journal article" date="2004" name="Genome Res.">
        <title>The status, quality, and expansion of the NIH full-length cDNA project: the Mammalian Gene Collection (MGC).</title>
        <authorList>
            <consortium name="The MGC Project Team"/>
        </authorList>
    </citation>
    <scope>NUCLEOTIDE SEQUENCE [LARGE SCALE MRNA]</scope>
    <source>
        <tissue>Brain</tissue>
    </source>
</reference>
<reference key="5">
    <citation type="journal article" date="2010" name="Cell">
        <title>A tissue-specific atlas of mouse protein phosphorylation and expression.</title>
        <authorList>
            <person name="Huttlin E.L."/>
            <person name="Jedrychowski M.P."/>
            <person name="Elias J.E."/>
            <person name="Goswami T."/>
            <person name="Rad R."/>
            <person name="Beausoleil S.A."/>
            <person name="Villen J."/>
            <person name="Haas W."/>
            <person name="Sowa M.E."/>
            <person name="Gygi S.P."/>
        </authorList>
    </citation>
    <scope>IDENTIFICATION BY MASS SPECTROMETRY [LARGE SCALE ANALYSIS]</scope>
    <source>
        <tissue>Brain</tissue>
    </source>
</reference>
<reference key="6">
    <citation type="journal article" date="2014" name="Mol. Cell. Proteomics">
        <title>Immunoaffinity enrichment and mass spectrometry analysis of protein methylation.</title>
        <authorList>
            <person name="Guo A."/>
            <person name="Gu H."/>
            <person name="Zhou J."/>
            <person name="Mulhern D."/>
            <person name="Wang Y."/>
            <person name="Lee K.A."/>
            <person name="Yang V."/>
            <person name="Aguiar M."/>
            <person name="Kornhauser J."/>
            <person name="Jia X."/>
            <person name="Ren J."/>
            <person name="Beausoleil S.A."/>
            <person name="Silva J.C."/>
            <person name="Vemulapalli V."/>
            <person name="Bedford M.T."/>
            <person name="Comb M.J."/>
        </authorList>
    </citation>
    <scope>METHYLATION [LARGE SCALE ANALYSIS] AT ARG-368</scope>
    <scope>IDENTIFICATION BY MASS SPECTROMETRY [LARGE SCALE ANALYSIS]</scope>
    <source>
        <tissue>Brain</tissue>
    </source>
</reference>
<feature type="chain" id="PRO_0000069081" description="Alpha-2A adrenergic receptor">
    <location>
        <begin position="1"/>
        <end position="465"/>
    </location>
</feature>
<feature type="topological domain" description="Extracellular" evidence="1">
    <location>
        <begin position="1"/>
        <end position="48"/>
    </location>
</feature>
<feature type="transmembrane region" description="Helical; Name=1" evidence="1">
    <location>
        <begin position="49"/>
        <end position="74"/>
    </location>
</feature>
<feature type="topological domain" description="Cytoplasmic" evidence="1">
    <location>
        <begin position="75"/>
        <end position="85"/>
    </location>
</feature>
<feature type="transmembrane region" description="Helical; Name=2" evidence="1">
    <location>
        <begin position="86"/>
        <end position="111"/>
    </location>
</feature>
<feature type="topological domain" description="Extracellular" evidence="1">
    <location>
        <begin position="112"/>
        <end position="121"/>
    </location>
</feature>
<feature type="transmembrane region" description="Helical; Name=3" evidence="1">
    <location>
        <begin position="122"/>
        <end position="144"/>
    </location>
</feature>
<feature type="topological domain" description="Cytoplasmic" evidence="1">
    <location>
        <begin position="145"/>
        <end position="164"/>
    </location>
</feature>
<feature type="transmembrane region" description="Helical; Name=4" evidence="1">
    <location>
        <begin position="165"/>
        <end position="188"/>
    </location>
</feature>
<feature type="topological domain" description="Extracellular" evidence="1">
    <location>
        <begin position="189"/>
        <end position="207"/>
    </location>
</feature>
<feature type="transmembrane region" description="Helical; Name=5" evidence="1">
    <location>
        <begin position="208"/>
        <end position="232"/>
    </location>
</feature>
<feature type="topological domain" description="Cytoplasmic" evidence="1">
    <location>
        <begin position="233"/>
        <end position="389"/>
    </location>
</feature>
<feature type="transmembrane region" description="Helical; Name=6" evidence="1">
    <location>
        <begin position="390"/>
        <end position="414"/>
    </location>
</feature>
<feature type="topological domain" description="Extracellular" evidence="1">
    <location>
        <begin position="415"/>
        <end position="424"/>
    </location>
</feature>
<feature type="transmembrane region" description="Helical; Name=7" evidence="1">
    <location>
        <begin position="425"/>
        <end position="445"/>
    </location>
</feature>
<feature type="topological domain" description="Cytoplasmic" evidence="1">
    <location>
        <begin position="446"/>
        <end position="465"/>
    </location>
</feature>
<feature type="region of interest" description="Disordered" evidence="5">
    <location>
        <begin position="242"/>
        <end position="378"/>
    </location>
</feature>
<feature type="compositionally biased region" description="Basic and acidic residues" evidence="5">
    <location>
        <begin position="313"/>
        <end position="330"/>
    </location>
</feature>
<feature type="compositionally biased region" description="Gly residues" evidence="5">
    <location>
        <begin position="353"/>
        <end position="363"/>
    </location>
</feature>
<feature type="site" description="Implicated in ligand binding" evidence="1">
    <location>
        <position position="128"/>
    </location>
</feature>
<feature type="site" description="Implicated in catechol agonist binding" evidence="1">
    <location>
        <position position="215"/>
    </location>
</feature>
<feature type="site" description="Implicated in catechol agonist binding" evidence="1">
    <location>
        <position position="219"/>
    </location>
</feature>
<feature type="modified residue" description="Phosphoserine" evidence="2">
    <location>
        <position position="346"/>
    </location>
</feature>
<feature type="modified residue" description="Omega-N-methylarginine" evidence="8">
    <location>
        <position position="368"/>
    </location>
</feature>
<feature type="lipid moiety-binding region" description="S-palmitoyl cysteine" evidence="1">
    <location>
        <position position="457"/>
    </location>
</feature>
<feature type="glycosylation site" description="N-linked (GlcNAc...) asparagine" evidence="3">
    <location>
        <position position="25"/>
    </location>
</feature>
<feature type="glycosylation site" description="N-linked (GlcNAc...) asparagine" evidence="3">
    <location>
        <position position="29"/>
    </location>
</feature>
<feature type="disulfide bond" evidence="4">
    <location>
        <begin position="121"/>
        <end position="203"/>
    </location>
</feature>
<name>ADA2A_MOUSE</name>
<proteinExistence type="evidence at protein level"/>
<evidence type="ECO:0000250" key="1"/>
<evidence type="ECO:0000250" key="2">
    <source>
        <dbReference type="UniProtKB" id="P22909"/>
    </source>
</evidence>
<evidence type="ECO:0000255" key="3"/>
<evidence type="ECO:0000255" key="4">
    <source>
        <dbReference type="PROSITE-ProRule" id="PRU00521"/>
    </source>
</evidence>
<evidence type="ECO:0000256" key="5">
    <source>
        <dbReference type="SAM" id="MobiDB-lite"/>
    </source>
</evidence>
<evidence type="ECO:0000305" key="6"/>
<evidence type="ECO:0000312" key="7">
    <source>
        <dbReference type="MGI" id="MGI:87934"/>
    </source>
</evidence>
<evidence type="ECO:0007744" key="8">
    <source>
    </source>
</evidence>
<accession>Q01338</accession>
<accession>Q3URE6</accession>